<name>Y569_ARCFU</name>
<keyword id="KW-1185">Reference proteome</keyword>
<proteinExistence type="predicted"/>
<dbReference type="EMBL" id="AE000782">
    <property type="protein sequence ID" value="AAB90673.1"/>
    <property type="molecule type" value="Genomic_DNA"/>
</dbReference>
<dbReference type="PIR" id="A69321">
    <property type="entry name" value="A69321"/>
</dbReference>
<dbReference type="RefSeq" id="WP_010878073.1">
    <property type="nucleotide sequence ID" value="NC_000917.1"/>
</dbReference>
<dbReference type="SMR" id="O19199"/>
<dbReference type="STRING" id="224325.AF_0569"/>
<dbReference type="PaxDb" id="224325-AF_0569"/>
<dbReference type="EnsemblBacteria" id="AAB90673">
    <property type="protein sequence ID" value="AAB90673"/>
    <property type="gene ID" value="AF_0569"/>
</dbReference>
<dbReference type="KEGG" id="afu:AF_0569"/>
<dbReference type="eggNOG" id="arCOG01009">
    <property type="taxonomic scope" value="Archaea"/>
</dbReference>
<dbReference type="HOGENOM" id="CLU_197235_2_0_2"/>
<dbReference type="OrthoDB" id="56938at2157"/>
<dbReference type="Proteomes" id="UP000002199">
    <property type="component" value="Chromosome"/>
</dbReference>
<dbReference type="GO" id="GO:0006355">
    <property type="term" value="P:regulation of DNA-templated transcription"/>
    <property type="evidence" value="ECO:0007669"/>
    <property type="project" value="InterPro"/>
</dbReference>
<dbReference type="CDD" id="cd22231">
    <property type="entry name" value="RHH_NikR_HicB-like"/>
    <property type="match status" value="1"/>
</dbReference>
<dbReference type="Gene3D" id="1.10.1220.10">
    <property type="entry name" value="Met repressor-like"/>
    <property type="match status" value="1"/>
</dbReference>
<dbReference type="InterPro" id="IPR013321">
    <property type="entry name" value="Arc_rbn_hlx_hlx"/>
</dbReference>
<dbReference type="InterPro" id="IPR002145">
    <property type="entry name" value="CopG"/>
</dbReference>
<dbReference type="InterPro" id="IPR010985">
    <property type="entry name" value="Ribbon_hlx_hlx"/>
</dbReference>
<dbReference type="Pfam" id="PF01402">
    <property type="entry name" value="RHH_1"/>
    <property type="match status" value="1"/>
</dbReference>
<dbReference type="SUPFAM" id="SSF47598">
    <property type="entry name" value="Ribbon-helix-helix"/>
    <property type="match status" value="1"/>
</dbReference>
<gene>
    <name type="ordered locus">AF_0569</name>
</gene>
<feature type="chain" id="PRO_0000127889" description="Uncharacterized protein AF_0569">
    <location>
        <begin position="1"/>
        <end position="60"/>
    </location>
</feature>
<accession>O19199</accession>
<sequence length="60" mass="7054">MPPTRKISIRLTEKYYTKLELLVESGEFTSVSEAVREAVKLLLEKYKEQLESIAQMDTYR</sequence>
<protein>
    <recommendedName>
        <fullName>Uncharacterized protein AF_0569</fullName>
    </recommendedName>
</protein>
<organism>
    <name type="scientific">Archaeoglobus fulgidus (strain ATCC 49558 / DSM 4304 / JCM 9628 / NBRC 100126 / VC-16)</name>
    <dbReference type="NCBI Taxonomy" id="224325"/>
    <lineage>
        <taxon>Archaea</taxon>
        <taxon>Methanobacteriati</taxon>
        <taxon>Methanobacteriota</taxon>
        <taxon>Archaeoglobi</taxon>
        <taxon>Archaeoglobales</taxon>
        <taxon>Archaeoglobaceae</taxon>
        <taxon>Archaeoglobus</taxon>
    </lineage>
</organism>
<reference key="1">
    <citation type="journal article" date="1997" name="Nature">
        <title>The complete genome sequence of the hyperthermophilic, sulphate-reducing archaeon Archaeoglobus fulgidus.</title>
        <authorList>
            <person name="Klenk H.-P."/>
            <person name="Clayton R.A."/>
            <person name="Tomb J.-F."/>
            <person name="White O."/>
            <person name="Nelson K.E."/>
            <person name="Ketchum K.A."/>
            <person name="Dodson R.J."/>
            <person name="Gwinn M.L."/>
            <person name="Hickey E.K."/>
            <person name="Peterson J.D."/>
            <person name="Richardson D.L."/>
            <person name="Kerlavage A.R."/>
            <person name="Graham D.E."/>
            <person name="Kyrpides N.C."/>
            <person name="Fleischmann R.D."/>
            <person name="Quackenbush J."/>
            <person name="Lee N.H."/>
            <person name="Sutton G.G."/>
            <person name="Gill S.R."/>
            <person name="Kirkness E.F."/>
            <person name="Dougherty B.A."/>
            <person name="McKenney K."/>
            <person name="Adams M.D."/>
            <person name="Loftus B.J."/>
            <person name="Peterson S.N."/>
            <person name="Reich C.I."/>
            <person name="McNeil L.K."/>
            <person name="Badger J.H."/>
            <person name="Glodek A."/>
            <person name="Zhou L."/>
            <person name="Overbeek R."/>
            <person name="Gocayne J.D."/>
            <person name="Weidman J.F."/>
            <person name="McDonald L.A."/>
            <person name="Utterback T.R."/>
            <person name="Cotton M.D."/>
            <person name="Spriggs T."/>
            <person name="Artiach P."/>
            <person name="Kaine B.P."/>
            <person name="Sykes S.M."/>
            <person name="Sadow P.W."/>
            <person name="D'Andrea K.P."/>
            <person name="Bowman C."/>
            <person name="Fujii C."/>
            <person name="Garland S.A."/>
            <person name="Mason T.M."/>
            <person name="Olsen G.J."/>
            <person name="Fraser C.M."/>
            <person name="Smith H.O."/>
            <person name="Woese C.R."/>
            <person name="Venter J.C."/>
        </authorList>
    </citation>
    <scope>NUCLEOTIDE SEQUENCE [LARGE SCALE GENOMIC DNA]</scope>
    <source>
        <strain>ATCC 49558 / DSM 4304 / JCM 9628 / NBRC 100126 / VC-16</strain>
    </source>
</reference>